<proteinExistence type="inferred from homology"/>
<keyword id="KW-0963">Cytoplasm</keyword>
<keyword id="KW-0255">Endonuclease</keyword>
<keyword id="KW-0378">Hydrolase</keyword>
<keyword id="KW-0479">Metal-binding</keyword>
<keyword id="KW-0540">Nuclease</keyword>
<keyword id="KW-1185">Reference proteome</keyword>
<keyword id="KW-0690">Ribosome biogenesis</keyword>
<keyword id="KW-0698">rRNA processing</keyword>
<keyword id="KW-0862">Zinc</keyword>
<name>YBEY_BURMA</name>
<gene>
    <name evidence="1" type="primary">ybeY</name>
    <name type="ordered locus">BMA0223</name>
</gene>
<comment type="function">
    <text evidence="1">Single strand-specific metallo-endoribonuclease involved in late-stage 70S ribosome quality control and in maturation of the 3' terminus of the 16S rRNA.</text>
</comment>
<comment type="cofactor">
    <cofactor evidence="1">
        <name>Zn(2+)</name>
        <dbReference type="ChEBI" id="CHEBI:29105"/>
    </cofactor>
    <text evidence="1">Binds 1 zinc ion.</text>
</comment>
<comment type="subcellular location">
    <subcellularLocation>
        <location evidence="1">Cytoplasm</location>
    </subcellularLocation>
</comment>
<comment type="similarity">
    <text evidence="1">Belongs to the endoribonuclease YbeY family.</text>
</comment>
<comment type="sequence caution" evidence="3">
    <conflict type="erroneous initiation">
        <sequence resource="EMBL-CDS" id="AAU48695"/>
    </conflict>
</comment>
<accession>Q62ML1</accession>
<feature type="chain" id="PRO_0000102428" description="Endoribonuclease YbeY">
    <location>
        <begin position="1"/>
        <end position="184"/>
    </location>
</feature>
<feature type="region of interest" description="Disordered" evidence="2">
    <location>
        <begin position="1"/>
        <end position="37"/>
    </location>
</feature>
<feature type="compositionally biased region" description="Acidic residues" evidence="2">
    <location>
        <begin position="1"/>
        <end position="11"/>
    </location>
</feature>
<feature type="compositionally biased region" description="Acidic residues" evidence="2">
    <location>
        <begin position="19"/>
        <end position="29"/>
    </location>
</feature>
<feature type="binding site" evidence="1">
    <location>
        <position position="146"/>
    </location>
    <ligand>
        <name>Zn(2+)</name>
        <dbReference type="ChEBI" id="CHEBI:29105"/>
        <note>catalytic</note>
    </ligand>
</feature>
<feature type="binding site" evidence="1">
    <location>
        <position position="150"/>
    </location>
    <ligand>
        <name>Zn(2+)</name>
        <dbReference type="ChEBI" id="CHEBI:29105"/>
        <note>catalytic</note>
    </ligand>
</feature>
<feature type="binding site" evidence="1">
    <location>
        <position position="156"/>
    </location>
    <ligand>
        <name>Zn(2+)</name>
        <dbReference type="ChEBI" id="CHEBI:29105"/>
        <note>catalytic</note>
    </ligand>
</feature>
<evidence type="ECO:0000255" key="1">
    <source>
        <dbReference type="HAMAP-Rule" id="MF_00009"/>
    </source>
</evidence>
<evidence type="ECO:0000256" key="2">
    <source>
        <dbReference type="SAM" id="MobiDB-lite"/>
    </source>
</evidence>
<evidence type="ECO:0000305" key="3"/>
<protein>
    <recommendedName>
        <fullName evidence="1">Endoribonuclease YbeY</fullName>
        <ecNumber evidence="1">3.1.-.-</ecNumber>
    </recommendedName>
</protein>
<organism>
    <name type="scientific">Burkholderia mallei (strain ATCC 23344)</name>
    <dbReference type="NCBI Taxonomy" id="243160"/>
    <lineage>
        <taxon>Bacteria</taxon>
        <taxon>Pseudomonadati</taxon>
        <taxon>Pseudomonadota</taxon>
        <taxon>Betaproteobacteria</taxon>
        <taxon>Burkholderiales</taxon>
        <taxon>Burkholderiaceae</taxon>
        <taxon>Burkholderia</taxon>
        <taxon>pseudomallei group</taxon>
    </lineage>
</organism>
<sequence>MTVEVGADENPDFAHDETDGAGDESDDEDAQGRDPELDLAVQYGDEIGDAQRKSLPKRKVIAEWLEPAIFSDTQFTVRFVGADEGRALNHSYRHKDYATNVLTFAYGEEPDGVTVADLVLCCPVVEKEAREQGKTLVAHYAHLLVHGALHAQGYDHERGEEDAAEMEALEIDILAKLGFPNPYR</sequence>
<reference key="1">
    <citation type="journal article" date="2004" name="Proc. Natl. Acad. Sci. U.S.A.">
        <title>Structural flexibility in the Burkholderia mallei genome.</title>
        <authorList>
            <person name="Nierman W.C."/>
            <person name="DeShazer D."/>
            <person name="Kim H.S."/>
            <person name="Tettelin H."/>
            <person name="Nelson K.E."/>
            <person name="Feldblyum T.V."/>
            <person name="Ulrich R.L."/>
            <person name="Ronning C.M."/>
            <person name="Brinkac L.M."/>
            <person name="Daugherty S.C."/>
            <person name="Davidsen T.D."/>
            <person name="DeBoy R.T."/>
            <person name="Dimitrov G."/>
            <person name="Dodson R.J."/>
            <person name="Durkin A.S."/>
            <person name="Gwinn M.L."/>
            <person name="Haft D.H."/>
            <person name="Khouri H.M."/>
            <person name="Kolonay J.F."/>
            <person name="Madupu R."/>
            <person name="Mohammoud Y."/>
            <person name="Nelson W.C."/>
            <person name="Radune D."/>
            <person name="Romero C.M."/>
            <person name="Sarria S."/>
            <person name="Selengut J."/>
            <person name="Shamblin C."/>
            <person name="Sullivan S.A."/>
            <person name="White O."/>
            <person name="Yu Y."/>
            <person name="Zafar N."/>
            <person name="Zhou L."/>
            <person name="Fraser C.M."/>
        </authorList>
    </citation>
    <scope>NUCLEOTIDE SEQUENCE [LARGE SCALE GENOMIC DNA]</scope>
    <source>
        <strain>ATCC 23344</strain>
    </source>
</reference>
<dbReference type="EC" id="3.1.-.-" evidence="1"/>
<dbReference type="EMBL" id="CP000010">
    <property type="protein sequence ID" value="AAU48695.1"/>
    <property type="status" value="ALT_INIT"/>
    <property type="molecule type" value="Genomic_DNA"/>
</dbReference>
<dbReference type="RefSeq" id="YP_102057.1">
    <property type="nucleotide sequence ID" value="NC_006348.1"/>
</dbReference>
<dbReference type="SMR" id="Q62ML1"/>
<dbReference type="KEGG" id="bma:BMA0223"/>
<dbReference type="PATRIC" id="fig|243160.12.peg.222"/>
<dbReference type="eggNOG" id="COG0319">
    <property type="taxonomic scope" value="Bacteria"/>
</dbReference>
<dbReference type="HOGENOM" id="CLU_1118710_0_0_4"/>
<dbReference type="Proteomes" id="UP000006693">
    <property type="component" value="Chromosome 1"/>
</dbReference>
<dbReference type="GO" id="GO:0005737">
    <property type="term" value="C:cytoplasm"/>
    <property type="evidence" value="ECO:0007669"/>
    <property type="project" value="UniProtKB-SubCell"/>
</dbReference>
<dbReference type="GO" id="GO:0004222">
    <property type="term" value="F:metalloendopeptidase activity"/>
    <property type="evidence" value="ECO:0007669"/>
    <property type="project" value="InterPro"/>
</dbReference>
<dbReference type="GO" id="GO:0004521">
    <property type="term" value="F:RNA endonuclease activity"/>
    <property type="evidence" value="ECO:0007669"/>
    <property type="project" value="UniProtKB-UniRule"/>
</dbReference>
<dbReference type="GO" id="GO:0008270">
    <property type="term" value="F:zinc ion binding"/>
    <property type="evidence" value="ECO:0007669"/>
    <property type="project" value="UniProtKB-UniRule"/>
</dbReference>
<dbReference type="GO" id="GO:0006364">
    <property type="term" value="P:rRNA processing"/>
    <property type="evidence" value="ECO:0007669"/>
    <property type="project" value="UniProtKB-UniRule"/>
</dbReference>
<dbReference type="Gene3D" id="3.40.390.30">
    <property type="entry name" value="Metalloproteases ('zincins'), catalytic domain"/>
    <property type="match status" value="1"/>
</dbReference>
<dbReference type="HAMAP" id="MF_00009">
    <property type="entry name" value="Endoribonucl_YbeY"/>
    <property type="match status" value="1"/>
</dbReference>
<dbReference type="InterPro" id="IPR023091">
    <property type="entry name" value="MetalPrtase_cat_dom_sf_prd"/>
</dbReference>
<dbReference type="InterPro" id="IPR002036">
    <property type="entry name" value="YbeY"/>
</dbReference>
<dbReference type="InterPro" id="IPR020549">
    <property type="entry name" value="YbeY_CS"/>
</dbReference>
<dbReference type="NCBIfam" id="NF010570">
    <property type="entry name" value="PRK13963.1"/>
    <property type="match status" value="1"/>
</dbReference>
<dbReference type="NCBIfam" id="TIGR00043">
    <property type="entry name" value="rRNA maturation RNase YbeY"/>
    <property type="match status" value="1"/>
</dbReference>
<dbReference type="PANTHER" id="PTHR46986">
    <property type="entry name" value="ENDORIBONUCLEASE YBEY, CHLOROPLASTIC"/>
    <property type="match status" value="1"/>
</dbReference>
<dbReference type="PANTHER" id="PTHR46986:SF1">
    <property type="entry name" value="ENDORIBONUCLEASE YBEY, CHLOROPLASTIC"/>
    <property type="match status" value="1"/>
</dbReference>
<dbReference type="Pfam" id="PF02130">
    <property type="entry name" value="YbeY"/>
    <property type="match status" value="1"/>
</dbReference>
<dbReference type="SUPFAM" id="SSF55486">
    <property type="entry name" value="Metalloproteases ('zincins'), catalytic domain"/>
    <property type="match status" value="1"/>
</dbReference>
<dbReference type="PROSITE" id="PS01306">
    <property type="entry name" value="UPF0054"/>
    <property type="match status" value="1"/>
</dbReference>